<evidence type="ECO:0000255" key="1">
    <source>
        <dbReference type="HAMAP-Rule" id="MF_01325"/>
    </source>
</evidence>
<evidence type="ECO:0000256" key="2">
    <source>
        <dbReference type="SAM" id="MobiDB-lite"/>
    </source>
</evidence>
<evidence type="ECO:0000305" key="3"/>
<reference key="1">
    <citation type="submission" date="2006-03" db="EMBL/GenBank/DDBJ databases">
        <title>Complete sequence of Rhodopseudomonas palustris BisB5.</title>
        <authorList>
            <consortium name="US DOE Joint Genome Institute"/>
            <person name="Copeland A."/>
            <person name="Lucas S."/>
            <person name="Lapidus A."/>
            <person name="Barry K."/>
            <person name="Detter J.C."/>
            <person name="Glavina del Rio T."/>
            <person name="Hammon N."/>
            <person name="Israni S."/>
            <person name="Dalin E."/>
            <person name="Tice H."/>
            <person name="Pitluck S."/>
            <person name="Chain P."/>
            <person name="Malfatti S."/>
            <person name="Shin M."/>
            <person name="Vergez L."/>
            <person name="Schmutz J."/>
            <person name="Larimer F."/>
            <person name="Land M."/>
            <person name="Hauser L."/>
            <person name="Pelletier D.A."/>
            <person name="Kyrpides N."/>
            <person name="Lykidis A."/>
            <person name="Oda Y."/>
            <person name="Harwood C.S."/>
            <person name="Richardson P."/>
        </authorList>
    </citation>
    <scope>NUCLEOTIDE SEQUENCE [LARGE SCALE GENOMIC DNA]</scope>
    <source>
        <strain>BisB5</strain>
    </source>
</reference>
<dbReference type="EMBL" id="CP000283">
    <property type="protein sequence ID" value="ABE40410.1"/>
    <property type="molecule type" value="Genomic_DNA"/>
</dbReference>
<dbReference type="SMR" id="Q134S9"/>
<dbReference type="STRING" id="316057.RPD_3184"/>
<dbReference type="KEGG" id="rpd:RPD_3184"/>
<dbReference type="eggNOG" id="COG0087">
    <property type="taxonomic scope" value="Bacteria"/>
</dbReference>
<dbReference type="HOGENOM" id="CLU_044142_2_0_5"/>
<dbReference type="BioCyc" id="RPAL316057:RPD_RS15985-MONOMER"/>
<dbReference type="Proteomes" id="UP000001818">
    <property type="component" value="Chromosome"/>
</dbReference>
<dbReference type="GO" id="GO:0022625">
    <property type="term" value="C:cytosolic large ribosomal subunit"/>
    <property type="evidence" value="ECO:0007669"/>
    <property type="project" value="TreeGrafter"/>
</dbReference>
<dbReference type="GO" id="GO:0019843">
    <property type="term" value="F:rRNA binding"/>
    <property type="evidence" value="ECO:0007669"/>
    <property type="project" value="UniProtKB-UniRule"/>
</dbReference>
<dbReference type="GO" id="GO:0003735">
    <property type="term" value="F:structural constituent of ribosome"/>
    <property type="evidence" value="ECO:0007669"/>
    <property type="project" value="InterPro"/>
</dbReference>
<dbReference type="GO" id="GO:0006412">
    <property type="term" value="P:translation"/>
    <property type="evidence" value="ECO:0007669"/>
    <property type="project" value="UniProtKB-UniRule"/>
</dbReference>
<dbReference type="FunFam" id="2.40.30.10:FF:000004">
    <property type="entry name" value="50S ribosomal protein L3"/>
    <property type="match status" value="1"/>
</dbReference>
<dbReference type="FunFam" id="3.30.160.810:FF:000001">
    <property type="entry name" value="50S ribosomal protein L3"/>
    <property type="match status" value="1"/>
</dbReference>
<dbReference type="Gene3D" id="3.30.160.810">
    <property type="match status" value="1"/>
</dbReference>
<dbReference type="Gene3D" id="2.40.30.10">
    <property type="entry name" value="Translation factors"/>
    <property type="match status" value="1"/>
</dbReference>
<dbReference type="HAMAP" id="MF_01325_B">
    <property type="entry name" value="Ribosomal_uL3_B"/>
    <property type="match status" value="1"/>
</dbReference>
<dbReference type="InterPro" id="IPR000597">
    <property type="entry name" value="Ribosomal_uL3"/>
</dbReference>
<dbReference type="InterPro" id="IPR019927">
    <property type="entry name" value="Ribosomal_uL3_bac/org-type"/>
</dbReference>
<dbReference type="InterPro" id="IPR019926">
    <property type="entry name" value="Ribosomal_uL3_CS"/>
</dbReference>
<dbReference type="InterPro" id="IPR009000">
    <property type="entry name" value="Transl_B-barrel_sf"/>
</dbReference>
<dbReference type="NCBIfam" id="TIGR03625">
    <property type="entry name" value="L3_bact"/>
    <property type="match status" value="1"/>
</dbReference>
<dbReference type="PANTHER" id="PTHR11229">
    <property type="entry name" value="50S RIBOSOMAL PROTEIN L3"/>
    <property type="match status" value="1"/>
</dbReference>
<dbReference type="PANTHER" id="PTHR11229:SF16">
    <property type="entry name" value="LARGE RIBOSOMAL SUBUNIT PROTEIN UL3C"/>
    <property type="match status" value="1"/>
</dbReference>
<dbReference type="Pfam" id="PF00297">
    <property type="entry name" value="Ribosomal_L3"/>
    <property type="match status" value="1"/>
</dbReference>
<dbReference type="SUPFAM" id="SSF50447">
    <property type="entry name" value="Translation proteins"/>
    <property type="match status" value="1"/>
</dbReference>
<dbReference type="PROSITE" id="PS00474">
    <property type="entry name" value="RIBOSOMAL_L3"/>
    <property type="match status" value="1"/>
</dbReference>
<name>RL3_RHOPS</name>
<gene>
    <name evidence="1" type="primary">rplC</name>
    <name type="ordered locus">RPD_3184</name>
</gene>
<proteinExistence type="inferred from homology"/>
<protein>
    <recommendedName>
        <fullName evidence="1">Large ribosomal subunit protein uL3</fullName>
    </recommendedName>
    <alternativeName>
        <fullName evidence="3">50S ribosomal protein L3</fullName>
    </alternativeName>
</protein>
<keyword id="KW-0488">Methylation</keyword>
<keyword id="KW-0687">Ribonucleoprotein</keyword>
<keyword id="KW-0689">Ribosomal protein</keyword>
<keyword id="KW-0694">RNA-binding</keyword>
<keyword id="KW-0699">rRNA-binding</keyword>
<accession>Q134S9</accession>
<feature type="chain" id="PRO_1000052123" description="Large ribosomal subunit protein uL3">
    <location>
        <begin position="1"/>
        <end position="241"/>
    </location>
</feature>
<feature type="region of interest" description="Disordered" evidence="2">
    <location>
        <begin position="139"/>
        <end position="164"/>
    </location>
</feature>
<feature type="region of interest" description="Disordered" evidence="2">
    <location>
        <begin position="215"/>
        <end position="241"/>
    </location>
</feature>
<feature type="modified residue" description="N5-methylglutamine" evidence="1">
    <location>
        <position position="151"/>
    </location>
</feature>
<sequence length="241" mass="25494">MRSGVIAQKVGMTRVFTEAGEHIPVTVLKLGNCQVVAHRTTEKNGYVALQLGSGARKTVYMPKAERGQFAVAKVEPKRKVAEFRVSEDALIPVGAEIQADHFVVGQFVDVTGTSTGKGFAGGMKRWNFGGLRATHGVSVSHRSIGSTGGRQDPGKTFKNKKMPGHMGVDRITTLNLRVVQTDVERGLILVEGAVPGSKGGWISVRDAVKKALPADAPKPGKFRLANGGDEVAAPAAEQEGA</sequence>
<comment type="function">
    <text evidence="1">One of the primary rRNA binding proteins, it binds directly near the 3'-end of the 23S rRNA, where it nucleates assembly of the 50S subunit.</text>
</comment>
<comment type="subunit">
    <text evidence="1">Part of the 50S ribosomal subunit. Forms a cluster with proteins L14 and L19.</text>
</comment>
<comment type="PTM">
    <text evidence="1">Methylated by PrmB.</text>
</comment>
<comment type="similarity">
    <text evidence="1">Belongs to the universal ribosomal protein uL3 family.</text>
</comment>
<organism>
    <name type="scientific">Rhodopseudomonas palustris (strain BisB5)</name>
    <dbReference type="NCBI Taxonomy" id="316057"/>
    <lineage>
        <taxon>Bacteria</taxon>
        <taxon>Pseudomonadati</taxon>
        <taxon>Pseudomonadota</taxon>
        <taxon>Alphaproteobacteria</taxon>
        <taxon>Hyphomicrobiales</taxon>
        <taxon>Nitrobacteraceae</taxon>
        <taxon>Rhodopseudomonas</taxon>
    </lineage>
</organism>